<feature type="chain" id="PRO_0000083952" description="Heterokaryon incompatibility protein 6, OR allele">
    <location>
        <begin position="1"/>
        <end position="680"/>
    </location>
</feature>
<dbReference type="EMBL" id="AF206700">
    <property type="protein sequence ID" value="AAF18141.1"/>
    <property type="molecule type" value="Genomic_DNA"/>
</dbReference>
<dbReference type="EMBL" id="AL390092">
    <property type="protein sequence ID" value="CAB98240.1"/>
    <property type="molecule type" value="Genomic_DNA"/>
</dbReference>
<dbReference type="EMBL" id="CM002237">
    <property type="protein sequence ID" value="EAA27576.3"/>
    <property type="molecule type" value="Genomic_DNA"/>
</dbReference>
<dbReference type="PIR" id="T51076">
    <property type="entry name" value="T51076"/>
</dbReference>
<dbReference type="RefSeq" id="XP_956812.3">
    <property type="nucleotide sequence ID" value="XM_951719.3"/>
</dbReference>
<dbReference type="STRING" id="367110.Q9UV10"/>
<dbReference type="PaxDb" id="5141-EFNCRP00000002679"/>
<dbReference type="EnsemblFungi" id="EAA27576">
    <property type="protein sequence ID" value="EAA27576"/>
    <property type="gene ID" value="NCU03533"/>
</dbReference>
<dbReference type="GeneID" id="3872950"/>
<dbReference type="KEGG" id="ncr:NCU03533"/>
<dbReference type="VEuPathDB" id="FungiDB:NCU03533"/>
<dbReference type="HOGENOM" id="CLU_877680_0_0_1"/>
<dbReference type="InParanoid" id="Q9UV10"/>
<dbReference type="OrthoDB" id="4576069at2759"/>
<dbReference type="Proteomes" id="UP000001805">
    <property type="component" value="Chromosome 6, Linkage Group II"/>
</dbReference>
<dbReference type="InterPro" id="IPR010730">
    <property type="entry name" value="HET"/>
</dbReference>
<dbReference type="InterPro" id="IPR052895">
    <property type="entry name" value="HetReg/Transcr_Mod"/>
</dbReference>
<dbReference type="PANTHER" id="PTHR24148">
    <property type="entry name" value="ANKYRIN REPEAT DOMAIN-CONTAINING PROTEIN 39 HOMOLOG-RELATED"/>
    <property type="match status" value="1"/>
</dbReference>
<dbReference type="PANTHER" id="PTHR24148:SF73">
    <property type="entry name" value="HET DOMAIN PROTEIN (AFU_ORTHOLOGUE AFUA_8G01020)"/>
    <property type="match status" value="1"/>
</dbReference>
<dbReference type="Pfam" id="PF06985">
    <property type="entry name" value="HET"/>
    <property type="match status" value="1"/>
</dbReference>
<protein>
    <recommendedName>
        <fullName>Heterokaryon incompatibility protein 6, OR allele</fullName>
        <shortName>Het-6(OR)</shortName>
    </recommendedName>
</protein>
<organism>
    <name type="scientific">Neurospora crassa (strain ATCC 24698 / 74-OR23-1A / CBS 708.71 / DSM 1257 / FGSC 987)</name>
    <dbReference type="NCBI Taxonomy" id="367110"/>
    <lineage>
        <taxon>Eukaryota</taxon>
        <taxon>Fungi</taxon>
        <taxon>Dikarya</taxon>
        <taxon>Ascomycota</taxon>
        <taxon>Pezizomycotina</taxon>
        <taxon>Sordariomycetes</taxon>
        <taxon>Sordariomycetidae</taxon>
        <taxon>Sordariales</taxon>
        <taxon>Sordariaceae</taxon>
        <taxon>Neurospora</taxon>
    </lineage>
</organism>
<reference key="1">
    <citation type="journal article" date="2000" name="Genetics">
        <title>Vegetative incompatibility in the het-6 region of Neurospora crassa is mediated by two linked genes.</title>
        <authorList>
            <person name="Smith M.L."/>
            <person name="Micali O.C."/>
            <person name="Hubbard S.P."/>
            <person name="Mir-Rashed N."/>
            <person name="Jacobson D.J."/>
            <person name="Glass N.L."/>
        </authorList>
    </citation>
    <scope>NUCLEOTIDE SEQUENCE [GENOMIC DNA]</scope>
</reference>
<reference key="2">
    <citation type="journal article" date="2003" name="Nucleic Acids Res.">
        <title>What's in the genome of a filamentous fungus? Analysis of the Neurospora genome sequence.</title>
        <authorList>
            <person name="Mannhaupt G."/>
            <person name="Montrone C."/>
            <person name="Haase D."/>
            <person name="Mewes H.-W."/>
            <person name="Aign V."/>
            <person name="Hoheisel J.D."/>
            <person name="Fartmann B."/>
            <person name="Nyakatura G."/>
            <person name="Kempken F."/>
            <person name="Maier J."/>
            <person name="Schulte U."/>
        </authorList>
    </citation>
    <scope>NUCLEOTIDE SEQUENCE [LARGE SCALE GENOMIC DNA]</scope>
    <source>
        <strain>ATCC 24698 / 74-OR23-1A / CBS 708.71 / DSM 1257 / FGSC 987</strain>
    </source>
</reference>
<reference key="3">
    <citation type="journal article" date="2003" name="Nature">
        <title>The genome sequence of the filamentous fungus Neurospora crassa.</title>
        <authorList>
            <person name="Galagan J.E."/>
            <person name="Calvo S.E."/>
            <person name="Borkovich K.A."/>
            <person name="Selker E.U."/>
            <person name="Read N.D."/>
            <person name="Jaffe D.B."/>
            <person name="FitzHugh W."/>
            <person name="Ma L.-J."/>
            <person name="Smirnov S."/>
            <person name="Purcell S."/>
            <person name="Rehman B."/>
            <person name="Elkins T."/>
            <person name="Engels R."/>
            <person name="Wang S."/>
            <person name="Nielsen C.B."/>
            <person name="Butler J."/>
            <person name="Endrizzi M."/>
            <person name="Qui D."/>
            <person name="Ianakiev P."/>
            <person name="Bell-Pedersen D."/>
            <person name="Nelson M.A."/>
            <person name="Werner-Washburne M."/>
            <person name="Selitrennikoff C.P."/>
            <person name="Kinsey J.A."/>
            <person name="Braun E.L."/>
            <person name="Zelter A."/>
            <person name="Schulte U."/>
            <person name="Kothe G.O."/>
            <person name="Jedd G."/>
            <person name="Mewes H.-W."/>
            <person name="Staben C."/>
            <person name="Marcotte E."/>
            <person name="Greenberg D."/>
            <person name="Roy A."/>
            <person name="Foley K."/>
            <person name="Naylor J."/>
            <person name="Stange-Thomann N."/>
            <person name="Barrett R."/>
            <person name="Gnerre S."/>
            <person name="Kamal M."/>
            <person name="Kamvysselis M."/>
            <person name="Mauceli E.W."/>
            <person name="Bielke C."/>
            <person name="Rudd S."/>
            <person name="Frishman D."/>
            <person name="Krystofova S."/>
            <person name="Rasmussen C."/>
            <person name="Metzenberg R.L."/>
            <person name="Perkins D.D."/>
            <person name="Kroken S."/>
            <person name="Cogoni C."/>
            <person name="Macino G."/>
            <person name="Catcheside D.E.A."/>
            <person name="Li W."/>
            <person name="Pratt R.J."/>
            <person name="Osmani S.A."/>
            <person name="DeSouza C.P.C."/>
            <person name="Glass N.L."/>
            <person name="Orbach M.J."/>
            <person name="Berglund J.A."/>
            <person name="Voelker R."/>
            <person name="Yarden O."/>
            <person name="Plamann M."/>
            <person name="Seiler S."/>
            <person name="Dunlap J.C."/>
            <person name="Radford A."/>
            <person name="Aramayo R."/>
            <person name="Natvig D.O."/>
            <person name="Alex L.A."/>
            <person name="Mannhaupt G."/>
            <person name="Ebbole D.J."/>
            <person name="Freitag M."/>
            <person name="Paulsen I."/>
            <person name="Sachs M.S."/>
            <person name="Lander E.S."/>
            <person name="Nusbaum C."/>
            <person name="Birren B.W."/>
        </authorList>
    </citation>
    <scope>NUCLEOTIDE SEQUENCE [LARGE SCALE GENOMIC DNA]</scope>
    <source>
        <strain>ATCC 24698 / 74-OR23-1A / CBS 708.71 / DSM 1257 / FGSC 987</strain>
    </source>
</reference>
<accession>Q9UV10</accession>
<accession>Q7RVQ1</accession>
<gene>
    <name type="primary">het-6</name>
    <name type="ORF">B2A19.100</name>
    <name type="ORF">NCU03533</name>
</gene>
<proteinExistence type="predicted"/>
<sequence>MANSAQTDTVSAGNLFSYDSVALSDPSTHIRLLDLHPASCYTDDLYCCIYTAPISPPPSYIALSYVWGDSTRTHEISVANEVNDGRAFIPLRLTSSLDTCLRHLRELHYRRQLEPLPLWIDQICINQDDNEEKSFQVRLMRDIYSSAHQVVVWLGPAVDDSNRVMDALAEVGQEFLDKIGDHTEEEHWLSVDRLIKEKIEQPDAVTFLREAYKVIYMLNREHSFTRWVERTWFKRLWTIQEFCLCADTIFACGYKVVSQKMVSALTDFMRCIIMDKCLRGLLETPDTPTYSTLFSGLMRLFPLFQHRGYCQYPYRKETLEHLLVELFVGVTPPCVTNKRDKVYGLLGLAGDADELGIRPDYTTSTTLAQVFTQTARAIIQKNWKIQRKRGLQILRYGSLGQRKSAPKNETDLPSWVPEWNGRIAKTYQREMSFLACGEIRMPDLVPTTSPTILGLRGFCVGTIVDLGEQARVDIWRRSADGAKKIVGFFDNFRRLLNLSKQNKRAKDIYASTAHHDAALWRVPIGDQHIIFGVGRQIAKRTDSKEDSAFQNFIAYYEDYVRRDDDWKDYMAAYQAGEEQAKLKMGKHMDRVFSEGYYMGLRHMEGKRPYLTENGYLGMGPGLLQPGDKVVVFHGDDIPYVVRPVPGKGDNTYLLMGEAYCDGIMDGELADTAEREDFYLV</sequence>
<comment type="function">
    <text>Involved in the non-self-recognition during asexual growth of N.crassa. This process involves restriction of heterokaryon formation via genetic differences at 11 het loci, including mating type.</text>
</comment>
<keyword id="KW-1185">Reference proteome</keyword>
<name>HET6_NEUCR</name>